<proteinExistence type="inferred from homology"/>
<accession>Q55823</accession>
<dbReference type="EMBL" id="BA000022">
    <property type="protein sequence ID" value="BAA10578.1"/>
    <property type="molecule type" value="Genomic_DNA"/>
</dbReference>
<dbReference type="PIR" id="S76634">
    <property type="entry name" value="S76634"/>
</dbReference>
<dbReference type="IntAct" id="Q55823">
    <property type="interactions" value="3"/>
</dbReference>
<dbReference type="STRING" id="1148.gene:10500082"/>
<dbReference type="PaxDb" id="1148-1001741"/>
<dbReference type="EnsemblBacteria" id="BAA10578">
    <property type="protein sequence ID" value="BAA10578"/>
    <property type="gene ID" value="BAA10578"/>
</dbReference>
<dbReference type="KEGG" id="syn:slr0503"/>
<dbReference type="eggNOG" id="COG0515">
    <property type="taxonomic scope" value="Bacteria"/>
</dbReference>
<dbReference type="InParanoid" id="Q55823"/>
<dbReference type="Proteomes" id="UP000001425">
    <property type="component" value="Chromosome"/>
</dbReference>
<dbReference type="InterPro" id="IPR010004">
    <property type="entry name" value="Uncharacterised_Ycf66"/>
</dbReference>
<dbReference type="Pfam" id="PF07444">
    <property type="entry name" value="Ycf66_N"/>
    <property type="match status" value="1"/>
</dbReference>
<evidence type="ECO:0000256" key="1">
    <source>
        <dbReference type="SAM" id="MobiDB-lite"/>
    </source>
</evidence>
<evidence type="ECO:0000305" key="2"/>
<reference key="1">
    <citation type="journal article" date="1995" name="DNA Res.">
        <title>Sequence analysis of the genome of the unicellular cyanobacterium Synechocystis sp. strain PCC6803. I. Sequence features in the 1 Mb region from map positions 64% to 92% of the genome.</title>
        <authorList>
            <person name="Kaneko T."/>
            <person name="Tanaka A."/>
            <person name="Sato S."/>
            <person name="Kotani H."/>
            <person name="Sazuka T."/>
            <person name="Miyajima N."/>
            <person name="Sugiura M."/>
            <person name="Tabata S."/>
        </authorList>
    </citation>
    <scope>NUCLEOTIDE SEQUENCE [LARGE SCALE GENOMIC DNA]</scope>
    <source>
        <strain>ATCC 27184 / PCC 6803 / N-1</strain>
    </source>
</reference>
<reference key="2">
    <citation type="journal article" date="1996" name="DNA Res.">
        <title>Sequence analysis of the genome of the unicellular cyanobacterium Synechocystis sp. strain PCC6803. II. Sequence determination of the entire genome and assignment of potential protein-coding regions.</title>
        <authorList>
            <person name="Kaneko T."/>
            <person name="Sato S."/>
            <person name="Kotani H."/>
            <person name="Tanaka A."/>
            <person name="Asamizu E."/>
            <person name="Nakamura Y."/>
            <person name="Miyajima N."/>
            <person name="Hirosawa M."/>
            <person name="Sugiura M."/>
            <person name="Sasamoto S."/>
            <person name="Kimura T."/>
            <person name="Hosouchi T."/>
            <person name="Matsuno A."/>
            <person name="Muraki A."/>
            <person name="Nakazaki N."/>
            <person name="Naruo K."/>
            <person name="Okumura S."/>
            <person name="Shimpo S."/>
            <person name="Takeuchi C."/>
            <person name="Wada T."/>
            <person name="Watanabe A."/>
            <person name="Yamada M."/>
            <person name="Yasuda M."/>
            <person name="Tabata S."/>
        </authorList>
    </citation>
    <scope>NUCLEOTIDE SEQUENCE [LARGE SCALE GENOMIC DNA]</scope>
    <source>
        <strain>ATCC 27184 / PCC 6803 / Kazusa</strain>
    </source>
</reference>
<gene>
    <name type="ordered locus">slr0503</name>
</gene>
<comment type="similarity">
    <text evidence="2">Belongs to the ycf66 family.</text>
</comment>
<protein>
    <recommendedName>
        <fullName>Ycf66-like protein</fullName>
    </recommendedName>
</protein>
<name>YC66L_SYNY3</name>
<sequence>MVNFGLNSASILGIFLAVAGAGLYFLRSVRPEVSRDYDIFFSAVGLLCGLILLFQGWRLDPILQFGQLLLSGSTVFFAAETIRLRGITTEQARRSAPYADDRRVSKTRVYTEAELDQLEPEDEPVARNNRRLRGYDDDARSGRPDGYGEAEARPRPRSQGRNAPPTNPNPRPTRSRPSAGRSAPQRPGPAPGYNDNYGYEDDYSGWESGANDVWDDPTPSRRPPTRRPRPEAGNDPAPSRRPRPSNNPPNDSFGDRPERNAPRNARPYEDEPPAAYVDYQPIDEADLTPRPTTPEDPADRNQEQSRSGNPRSQRPSRSPVDGEEPPIGADDQERFDY</sequence>
<organism>
    <name type="scientific">Synechocystis sp. (strain ATCC 27184 / PCC 6803 / Kazusa)</name>
    <dbReference type="NCBI Taxonomy" id="1111708"/>
    <lineage>
        <taxon>Bacteria</taxon>
        <taxon>Bacillati</taxon>
        <taxon>Cyanobacteriota</taxon>
        <taxon>Cyanophyceae</taxon>
        <taxon>Synechococcales</taxon>
        <taxon>Merismopediaceae</taxon>
        <taxon>Synechocystis</taxon>
    </lineage>
</organism>
<keyword id="KW-1185">Reference proteome</keyword>
<feature type="chain" id="PRO_0000217394" description="Ycf66-like protein">
    <location>
        <begin position="1"/>
        <end position="337"/>
    </location>
</feature>
<feature type="region of interest" description="Disordered" evidence="1">
    <location>
        <begin position="111"/>
        <end position="337"/>
    </location>
</feature>
<feature type="compositionally biased region" description="Acidic residues" evidence="1">
    <location>
        <begin position="113"/>
        <end position="123"/>
    </location>
</feature>
<feature type="compositionally biased region" description="Basic and acidic residues" evidence="1">
    <location>
        <begin position="133"/>
        <end position="143"/>
    </location>
</feature>
<feature type="compositionally biased region" description="Basic and acidic residues" evidence="1">
    <location>
        <begin position="253"/>
        <end position="269"/>
    </location>
</feature>
<feature type="compositionally biased region" description="Polar residues" evidence="1">
    <location>
        <begin position="304"/>
        <end position="316"/>
    </location>
</feature>